<evidence type="ECO:0000255" key="1">
    <source>
        <dbReference type="HAMAP-Rule" id="MF_00580"/>
    </source>
</evidence>
<organism>
    <name type="scientific">Bacillus mycoides (strain KBAB4)</name>
    <name type="common">Bacillus weihenstephanensis</name>
    <dbReference type="NCBI Taxonomy" id="315730"/>
    <lineage>
        <taxon>Bacteria</taxon>
        <taxon>Bacillati</taxon>
        <taxon>Bacillota</taxon>
        <taxon>Bacilli</taxon>
        <taxon>Bacillales</taxon>
        <taxon>Bacillaceae</taxon>
        <taxon>Bacillus</taxon>
        <taxon>Bacillus cereus group</taxon>
    </lineage>
</organism>
<proteinExistence type="inferred from homology"/>
<sequence>MLKPLGDRVVIELVQAEEKTASGIVLPETAKEKPQEGKVIAVGTGRVLENGERVALEVAAGDLIIFSKYAGTEVKYEGTDYLILRESDILAIIG</sequence>
<dbReference type="EMBL" id="CP000903">
    <property type="protein sequence ID" value="ABY41513.1"/>
    <property type="molecule type" value="Genomic_DNA"/>
</dbReference>
<dbReference type="RefSeq" id="WP_002009985.1">
    <property type="nucleotide sequence ID" value="NZ_CAKMRX030000148.1"/>
</dbReference>
<dbReference type="SMR" id="A9VQG7"/>
<dbReference type="GeneID" id="66264651"/>
<dbReference type="KEGG" id="bwe:BcerKBAB4_0245"/>
<dbReference type="eggNOG" id="COG0234">
    <property type="taxonomic scope" value="Bacteria"/>
</dbReference>
<dbReference type="HOGENOM" id="CLU_132825_2_0_9"/>
<dbReference type="Proteomes" id="UP000002154">
    <property type="component" value="Chromosome"/>
</dbReference>
<dbReference type="GO" id="GO:0005737">
    <property type="term" value="C:cytoplasm"/>
    <property type="evidence" value="ECO:0007669"/>
    <property type="project" value="UniProtKB-SubCell"/>
</dbReference>
<dbReference type="GO" id="GO:0005524">
    <property type="term" value="F:ATP binding"/>
    <property type="evidence" value="ECO:0007669"/>
    <property type="project" value="InterPro"/>
</dbReference>
<dbReference type="GO" id="GO:0046872">
    <property type="term" value="F:metal ion binding"/>
    <property type="evidence" value="ECO:0007669"/>
    <property type="project" value="TreeGrafter"/>
</dbReference>
<dbReference type="GO" id="GO:0044183">
    <property type="term" value="F:protein folding chaperone"/>
    <property type="evidence" value="ECO:0007669"/>
    <property type="project" value="InterPro"/>
</dbReference>
<dbReference type="GO" id="GO:0051087">
    <property type="term" value="F:protein-folding chaperone binding"/>
    <property type="evidence" value="ECO:0007669"/>
    <property type="project" value="TreeGrafter"/>
</dbReference>
<dbReference type="GO" id="GO:0051082">
    <property type="term" value="F:unfolded protein binding"/>
    <property type="evidence" value="ECO:0007669"/>
    <property type="project" value="TreeGrafter"/>
</dbReference>
<dbReference type="GO" id="GO:0051085">
    <property type="term" value="P:chaperone cofactor-dependent protein refolding"/>
    <property type="evidence" value="ECO:0007669"/>
    <property type="project" value="TreeGrafter"/>
</dbReference>
<dbReference type="CDD" id="cd00320">
    <property type="entry name" value="cpn10"/>
    <property type="match status" value="1"/>
</dbReference>
<dbReference type="FunFam" id="2.30.33.40:FF:000001">
    <property type="entry name" value="10 kDa chaperonin"/>
    <property type="match status" value="1"/>
</dbReference>
<dbReference type="Gene3D" id="2.30.33.40">
    <property type="entry name" value="GroES chaperonin"/>
    <property type="match status" value="1"/>
</dbReference>
<dbReference type="HAMAP" id="MF_00580">
    <property type="entry name" value="CH10"/>
    <property type="match status" value="1"/>
</dbReference>
<dbReference type="InterPro" id="IPR020818">
    <property type="entry name" value="Chaperonin_GroES"/>
</dbReference>
<dbReference type="InterPro" id="IPR037124">
    <property type="entry name" value="Chaperonin_GroES_sf"/>
</dbReference>
<dbReference type="InterPro" id="IPR018369">
    <property type="entry name" value="Chaprnonin_Cpn10_CS"/>
</dbReference>
<dbReference type="InterPro" id="IPR011032">
    <property type="entry name" value="GroES-like_sf"/>
</dbReference>
<dbReference type="NCBIfam" id="NF001527">
    <property type="entry name" value="PRK00364.1-2"/>
    <property type="match status" value="1"/>
</dbReference>
<dbReference type="NCBIfam" id="NF001530">
    <property type="entry name" value="PRK00364.1-6"/>
    <property type="match status" value="1"/>
</dbReference>
<dbReference type="NCBIfam" id="NF001531">
    <property type="entry name" value="PRK00364.2-2"/>
    <property type="match status" value="1"/>
</dbReference>
<dbReference type="NCBIfam" id="NF001533">
    <property type="entry name" value="PRK00364.2-4"/>
    <property type="match status" value="1"/>
</dbReference>
<dbReference type="NCBIfam" id="NF001534">
    <property type="entry name" value="PRK00364.2-5"/>
    <property type="match status" value="1"/>
</dbReference>
<dbReference type="PANTHER" id="PTHR10772">
    <property type="entry name" value="10 KDA HEAT SHOCK PROTEIN"/>
    <property type="match status" value="1"/>
</dbReference>
<dbReference type="PANTHER" id="PTHR10772:SF58">
    <property type="entry name" value="CO-CHAPERONIN GROES"/>
    <property type="match status" value="1"/>
</dbReference>
<dbReference type="Pfam" id="PF00166">
    <property type="entry name" value="Cpn10"/>
    <property type="match status" value="1"/>
</dbReference>
<dbReference type="PRINTS" id="PR00297">
    <property type="entry name" value="CHAPERONIN10"/>
</dbReference>
<dbReference type="SMART" id="SM00883">
    <property type="entry name" value="Cpn10"/>
    <property type="match status" value="1"/>
</dbReference>
<dbReference type="SUPFAM" id="SSF50129">
    <property type="entry name" value="GroES-like"/>
    <property type="match status" value="1"/>
</dbReference>
<dbReference type="PROSITE" id="PS00681">
    <property type="entry name" value="CHAPERONINS_CPN10"/>
    <property type="match status" value="1"/>
</dbReference>
<accession>A9VQG7</accession>
<reference key="1">
    <citation type="journal article" date="2008" name="Chem. Biol. Interact.">
        <title>Extending the Bacillus cereus group genomics to putative food-borne pathogens of different toxicity.</title>
        <authorList>
            <person name="Lapidus A."/>
            <person name="Goltsman E."/>
            <person name="Auger S."/>
            <person name="Galleron N."/>
            <person name="Segurens B."/>
            <person name="Dossat C."/>
            <person name="Land M.L."/>
            <person name="Broussolle V."/>
            <person name="Brillard J."/>
            <person name="Guinebretiere M.-H."/>
            <person name="Sanchis V."/>
            <person name="Nguen-the C."/>
            <person name="Lereclus D."/>
            <person name="Richardson P."/>
            <person name="Wincker P."/>
            <person name="Weissenbach J."/>
            <person name="Ehrlich S.D."/>
            <person name="Sorokin A."/>
        </authorList>
    </citation>
    <scope>NUCLEOTIDE SEQUENCE [LARGE SCALE GENOMIC DNA]</scope>
    <source>
        <strain>KBAB4</strain>
    </source>
</reference>
<comment type="function">
    <text evidence="1">Together with the chaperonin GroEL, plays an essential role in assisting protein folding. The GroEL-GroES system forms a nano-cage that allows encapsulation of the non-native substrate proteins and provides a physical environment optimized to promote and accelerate protein folding. GroES binds to the apical surface of the GroEL ring, thereby capping the opening of the GroEL channel.</text>
</comment>
<comment type="subunit">
    <text evidence="1">Heptamer of 7 subunits arranged in a ring. Interacts with the chaperonin GroEL.</text>
</comment>
<comment type="subcellular location">
    <subcellularLocation>
        <location evidence="1">Cytoplasm</location>
    </subcellularLocation>
</comment>
<comment type="similarity">
    <text evidence="1">Belongs to the GroES chaperonin family.</text>
</comment>
<name>CH10_BACMK</name>
<protein>
    <recommendedName>
        <fullName evidence="1">Co-chaperonin GroES</fullName>
    </recommendedName>
    <alternativeName>
        <fullName evidence="1">10 kDa chaperonin</fullName>
    </alternativeName>
    <alternativeName>
        <fullName evidence="1">Chaperonin-10</fullName>
        <shortName evidence="1">Cpn10</shortName>
    </alternativeName>
</protein>
<gene>
    <name evidence="1" type="primary">groES</name>
    <name evidence="1" type="synonym">groS</name>
    <name type="ordered locus">BcerKBAB4_0245</name>
</gene>
<keyword id="KW-0143">Chaperone</keyword>
<keyword id="KW-0963">Cytoplasm</keyword>
<feature type="chain" id="PRO_1000129626" description="Co-chaperonin GroES">
    <location>
        <begin position="1"/>
        <end position="94"/>
    </location>
</feature>